<feature type="chain" id="PRO_1000130664" description="Cytochrome b6">
    <location>
        <begin position="1"/>
        <end position="213"/>
    </location>
</feature>
<feature type="transmembrane region" description="Helical" evidence="1">
    <location>
        <begin position="30"/>
        <end position="50"/>
    </location>
</feature>
<feature type="transmembrane region" description="Helical" evidence="1">
    <location>
        <begin position="88"/>
        <end position="108"/>
    </location>
</feature>
<feature type="transmembrane region" description="Helical" evidence="1">
    <location>
        <begin position="114"/>
        <end position="134"/>
    </location>
</feature>
<feature type="transmembrane region" description="Helical" evidence="1">
    <location>
        <begin position="184"/>
        <end position="204"/>
    </location>
</feature>
<feature type="binding site" description="covalent" evidence="1">
    <location>
        <position position="33"/>
    </location>
    <ligand>
        <name>heme c</name>
        <dbReference type="ChEBI" id="CHEBI:61717"/>
    </ligand>
</feature>
<feature type="binding site" description="axial binding residue" evidence="1">
    <location>
        <position position="84"/>
    </location>
    <ligand>
        <name>heme b</name>
        <dbReference type="ChEBI" id="CHEBI:60344"/>
        <label>2</label>
    </ligand>
    <ligandPart>
        <name>Fe</name>
        <dbReference type="ChEBI" id="CHEBI:18248"/>
    </ligandPart>
</feature>
<feature type="binding site" description="axial binding residue" evidence="1">
    <location>
        <position position="98"/>
    </location>
    <ligand>
        <name>heme b</name>
        <dbReference type="ChEBI" id="CHEBI:60344"/>
        <label>1</label>
    </ligand>
    <ligandPart>
        <name>Fe</name>
        <dbReference type="ChEBI" id="CHEBI:18248"/>
    </ligandPart>
</feature>
<feature type="binding site" description="axial binding residue" evidence="1">
    <location>
        <position position="185"/>
    </location>
    <ligand>
        <name>heme b</name>
        <dbReference type="ChEBI" id="CHEBI:60344"/>
        <label>2</label>
    </ligand>
    <ligandPart>
        <name>Fe</name>
        <dbReference type="ChEBI" id="CHEBI:18248"/>
    </ligandPart>
</feature>
<feature type="binding site" description="axial binding residue" evidence="1">
    <location>
        <position position="200"/>
    </location>
    <ligand>
        <name>heme b</name>
        <dbReference type="ChEBI" id="CHEBI:60344"/>
        <label>1</label>
    </ligand>
    <ligandPart>
        <name>Fe</name>
        <dbReference type="ChEBI" id="CHEBI:18248"/>
    </ligandPart>
</feature>
<organism>
    <name type="scientific">Heliobacterium modesticaldum (strain ATCC 51547 / Ice1)</name>
    <dbReference type="NCBI Taxonomy" id="498761"/>
    <lineage>
        <taxon>Bacteria</taxon>
        <taxon>Bacillati</taxon>
        <taxon>Bacillota</taxon>
        <taxon>Clostridia</taxon>
        <taxon>Eubacteriales</taxon>
        <taxon>Heliobacteriaceae</taxon>
        <taxon>Heliomicrobium</taxon>
    </lineage>
</organism>
<dbReference type="EMBL" id="CP000930">
    <property type="protein sequence ID" value="ABZ83854.1"/>
    <property type="molecule type" value="Genomic_DNA"/>
</dbReference>
<dbReference type="RefSeq" id="WP_012282372.1">
    <property type="nucleotide sequence ID" value="NC_010337.2"/>
</dbReference>
<dbReference type="SMR" id="B0TBL5"/>
<dbReference type="STRING" id="498761.HM1_0698"/>
<dbReference type="KEGG" id="hmo:HM1_0698"/>
<dbReference type="eggNOG" id="COG1290">
    <property type="taxonomic scope" value="Bacteria"/>
</dbReference>
<dbReference type="HOGENOM" id="CLU_031114_0_1_9"/>
<dbReference type="OrthoDB" id="9804503at2"/>
<dbReference type="Proteomes" id="UP000008550">
    <property type="component" value="Chromosome"/>
</dbReference>
<dbReference type="GO" id="GO:0005886">
    <property type="term" value="C:plasma membrane"/>
    <property type="evidence" value="ECO:0007669"/>
    <property type="project" value="UniProtKB-SubCell"/>
</dbReference>
<dbReference type="GO" id="GO:0045158">
    <property type="term" value="F:electron transporter, transferring electrons within cytochrome b6/f complex of photosystem II activity"/>
    <property type="evidence" value="ECO:0007669"/>
    <property type="project" value="UniProtKB-UniRule"/>
</dbReference>
<dbReference type="GO" id="GO:0046872">
    <property type="term" value="F:metal ion binding"/>
    <property type="evidence" value="ECO:0007669"/>
    <property type="project" value="UniProtKB-KW"/>
</dbReference>
<dbReference type="GO" id="GO:0016491">
    <property type="term" value="F:oxidoreductase activity"/>
    <property type="evidence" value="ECO:0007669"/>
    <property type="project" value="InterPro"/>
</dbReference>
<dbReference type="GO" id="GO:0015979">
    <property type="term" value="P:photosynthesis"/>
    <property type="evidence" value="ECO:0007669"/>
    <property type="project" value="UniProtKB-UniRule"/>
</dbReference>
<dbReference type="GO" id="GO:0022904">
    <property type="term" value="P:respiratory electron transport chain"/>
    <property type="evidence" value="ECO:0007669"/>
    <property type="project" value="InterPro"/>
</dbReference>
<dbReference type="CDD" id="cd00284">
    <property type="entry name" value="Cytochrome_b_N"/>
    <property type="match status" value="1"/>
</dbReference>
<dbReference type="Gene3D" id="1.20.810.10">
    <property type="entry name" value="Cytochrome Bc1 Complex, Chain C"/>
    <property type="match status" value="1"/>
</dbReference>
<dbReference type="HAMAP" id="MF_00633">
    <property type="entry name" value="Cytb6_f_cytb6"/>
    <property type="match status" value="1"/>
</dbReference>
<dbReference type="InterPro" id="IPR005797">
    <property type="entry name" value="Cyt_b/b6_N"/>
</dbReference>
<dbReference type="InterPro" id="IPR023530">
    <property type="entry name" value="Cyt_B6_PetB"/>
</dbReference>
<dbReference type="InterPro" id="IPR027387">
    <property type="entry name" value="Cytb/b6-like_sf"/>
</dbReference>
<dbReference type="InterPro" id="IPR048259">
    <property type="entry name" value="Cytochrome_b_N_euk/bac"/>
</dbReference>
<dbReference type="InterPro" id="IPR016174">
    <property type="entry name" value="Di-haem_cyt_TM"/>
</dbReference>
<dbReference type="NCBIfam" id="NF040969">
    <property type="entry name" value="cytb_ExtP"/>
    <property type="match status" value="1"/>
</dbReference>
<dbReference type="PANTHER" id="PTHR19271">
    <property type="entry name" value="CYTOCHROME B"/>
    <property type="match status" value="1"/>
</dbReference>
<dbReference type="PANTHER" id="PTHR19271:SF16">
    <property type="entry name" value="CYTOCHROME B"/>
    <property type="match status" value="1"/>
</dbReference>
<dbReference type="Pfam" id="PF00033">
    <property type="entry name" value="Cytochrome_B"/>
    <property type="match status" value="1"/>
</dbReference>
<dbReference type="PIRSF" id="PIRSF000032">
    <property type="entry name" value="Cytochrome_b6"/>
    <property type="match status" value="1"/>
</dbReference>
<dbReference type="SUPFAM" id="SSF81342">
    <property type="entry name" value="Transmembrane di-heme cytochromes"/>
    <property type="match status" value="1"/>
</dbReference>
<dbReference type="PROSITE" id="PS51002">
    <property type="entry name" value="CYTB_NTER"/>
    <property type="match status" value="1"/>
</dbReference>
<comment type="function">
    <text evidence="1">Component of the cytochrome bc complex which donates electrons to the photosynthetic reaction center.</text>
</comment>
<comment type="cofactor">
    <cofactor evidence="1">
        <name>heme b</name>
        <dbReference type="ChEBI" id="CHEBI:60344"/>
    </cofactor>
    <text evidence="1">Binds 2 heme b groups non-covalently with two histidine residues as axial ligands.</text>
</comment>
<comment type="cofactor">
    <cofactor evidence="1">
        <name>heme c</name>
        <dbReference type="ChEBI" id="CHEBI:61717"/>
    </cofactor>
    <text evidence="1">Binds one heme group covalently by a single cysteine link with no axial amino acid ligand. This heme was named heme ci.</text>
</comment>
<comment type="subunit">
    <text evidence="1">The subunits of the cytochrome bc complex are a Rieske Fe-S protein (PetC), cytochrome b6 (PetB), subunit IV (PetD), and a diheme cytochrome c (PetX).</text>
</comment>
<comment type="subcellular location">
    <subcellularLocation>
        <location evidence="1">Cell membrane</location>
        <topology evidence="1">Multi-pass membrane protein</topology>
    </subcellularLocation>
</comment>
<comment type="miscellaneous">
    <text evidence="1">Heme 1 (or BH or b566) is high-potential and absorbs at about 566 nm, and heme 2 (or BL or b562) is low-potential and absorbs at about 562 nm.</text>
</comment>
<comment type="similarity">
    <text evidence="1">Belongs to the cytochrome b family. PetB subfamily.</text>
</comment>
<proteinExistence type="inferred from homology"/>
<reference key="1">
    <citation type="journal article" date="2008" name="J. Bacteriol.">
        <title>The genome of Heliobacterium modesticaldum, a phototrophic representative of the Firmicutes containing the simplest photosynthetic apparatus.</title>
        <authorList>
            <person name="Sattley W.M."/>
            <person name="Madigan M.T."/>
            <person name="Swingley W.D."/>
            <person name="Cheung P.C."/>
            <person name="Clocksin K.M."/>
            <person name="Conrad A.L."/>
            <person name="Dejesa L.C."/>
            <person name="Honchak B.M."/>
            <person name="Jung D.O."/>
            <person name="Karbach L.E."/>
            <person name="Kurdoglu A."/>
            <person name="Lahiri S."/>
            <person name="Mastrian S.D."/>
            <person name="Page L.E."/>
            <person name="Taylor H.L."/>
            <person name="Wang Z.T."/>
            <person name="Raymond J."/>
            <person name="Chen M."/>
            <person name="Blankenship R.E."/>
            <person name="Touchman J.W."/>
        </authorList>
    </citation>
    <scope>NUCLEOTIDE SEQUENCE [LARGE SCALE GENOMIC DNA]</scope>
    <source>
        <strain>ATCC 51547 / Ice1</strain>
    </source>
</reference>
<name>CYB6_HELMI</name>
<gene>
    <name evidence="1" type="primary">petB</name>
    <name evidence="1" type="synonym">cytB</name>
    <name type="ordered locus">Helmi_12290</name>
    <name type="ORF">HM1_0698</name>
</gene>
<accession>B0TBL5</accession>
<protein>
    <recommendedName>
        <fullName evidence="1">Cytochrome b6</fullName>
    </recommendedName>
</protein>
<evidence type="ECO:0000255" key="1">
    <source>
        <dbReference type="HAMAP-Rule" id="MF_00633"/>
    </source>
</evidence>
<sequence>MNWLEERMPGIGRIAKDIAEHPVPSHTLNIFYCLGGLTLLCFIIQCLTGVFLAFYYKPTPEAAFASVQMITNEVRFGSVIRSMHHWSCQLMILLVFLHMLRVYYTGAFKKPRELNWVAGCFLLVLSLGLAFTGYLLPYEQLSYWASVIGAETANTLPVIGPTLKIMMQGGIKVTAEMLSRFYVLHVMILPAITIGFLVAHFIMIRVQGISDPM</sequence>
<keyword id="KW-1003">Cell membrane</keyword>
<keyword id="KW-0249">Electron transport</keyword>
<keyword id="KW-0349">Heme</keyword>
<keyword id="KW-0408">Iron</keyword>
<keyword id="KW-0472">Membrane</keyword>
<keyword id="KW-0479">Metal-binding</keyword>
<keyword id="KW-0602">Photosynthesis</keyword>
<keyword id="KW-1185">Reference proteome</keyword>
<keyword id="KW-0812">Transmembrane</keyword>
<keyword id="KW-1133">Transmembrane helix</keyword>
<keyword id="KW-0813">Transport</keyword>